<name>RL25_PSEFS</name>
<organism>
    <name type="scientific">Pseudomonas fluorescens (strain SBW25)</name>
    <dbReference type="NCBI Taxonomy" id="216595"/>
    <lineage>
        <taxon>Bacteria</taxon>
        <taxon>Pseudomonadati</taxon>
        <taxon>Pseudomonadota</taxon>
        <taxon>Gammaproteobacteria</taxon>
        <taxon>Pseudomonadales</taxon>
        <taxon>Pseudomonadaceae</taxon>
        <taxon>Pseudomonas</taxon>
    </lineage>
</organism>
<accession>C3KCS0</accession>
<keyword id="KW-0687">Ribonucleoprotein</keyword>
<keyword id="KW-0689">Ribosomal protein</keyword>
<keyword id="KW-0694">RNA-binding</keyword>
<keyword id="KW-0699">rRNA-binding</keyword>
<dbReference type="EMBL" id="AM181176">
    <property type="protein sequence ID" value="CAY47000.1"/>
    <property type="molecule type" value="Genomic_DNA"/>
</dbReference>
<dbReference type="RefSeq" id="WP_012722105.1">
    <property type="nucleotide sequence ID" value="NC_012660.1"/>
</dbReference>
<dbReference type="SMR" id="C3KCS0"/>
<dbReference type="STRING" id="294.SRM1_04806"/>
<dbReference type="PATRIC" id="fig|216595.4.peg.966"/>
<dbReference type="eggNOG" id="COG1825">
    <property type="taxonomic scope" value="Bacteria"/>
</dbReference>
<dbReference type="HOGENOM" id="CLU_075939_0_1_6"/>
<dbReference type="OrthoDB" id="9806411at2"/>
<dbReference type="GO" id="GO:0022625">
    <property type="term" value="C:cytosolic large ribosomal subunit"/>
    <property type="evidence" value="ECO:0007669"/>
    <property type="project" value="TreeGrafter"/>
</dbReference>
<dbReference type="GO" id="GO:0008097">
    <property type="term" value="F:5S rRNA binding"/>
    <property type="evidence" value="ECO:0007669"/>
    <property type="project" value="InterPro"/>
</dbReference>
<dbReference type="GO" id="GO:0003735">
    <property type="term" value="F:structural constituent of ribosome"/>
    <property type="evidence" value="ECO:0007669"/>
    <property type="project" value="InterPro"/>
</dbReference>
<dbReference type="GO" id="GO:0006412">
    <property type="term" value="P:translation"/>
    <property type="evidence" value="ECO:0007669"/>
    <property type="project" value="UniProtKB-UniRule"/>
</dbReference>
<dbReference type="CDD" id="cd00495">
    <property type="entry name" value="Ribosomal_L25_TL5_CTC"/>
    <property type="match status" value="1"/>
</dbReference>
<dbReference type="Gene3D" id="2.170.120.20">
    <property type="entry name" value="Ribosomal protein L25, beta domain"/>
    <property type="match status" value="1"/>
</dbReference>
<dbReference type="Gene3D" id="2.40.240.10">
    <property type="entry name" value="Ribosomal Protein L25, Chain P"/>
    <property type="match status" value="1"/>
</dbReference>
<dbReference type="HAMAP" id="MF_01336">
    <property type="entry name" value="Ribosomal_bL25"/>
    <property type="match status" value="1"/>
</dbReference>
<dbReference type="HAMAP" id="MF_01334">
    <property type="entry name" value="Ribosomal_bL25_CTC"/>
    <property type="match status" value="1"/>
</dbReference>
<dbReference type="InterPro" id="IPR020056">
    <property type="entry name" value="Rbsml_bL25/Gln-tRNA_synth_N"/>
</dbReference>
<dbReference type="InterPro" id="IPR011035">
    <property type="entry name" value="Ribosomal_bL25/Gln-tRNA_synth"/>
</dbReference>
<dbReference type="InterPro" id="IPR020057">
    <property type="entry name" value="Ribosomal_bL25_b-dom"/>
</dbReference>
<dbReference type="InterPro" id="IPR037121">
    <property type="entry name" value="Ribosomal_bL25_C"/>
</dbReference>
<dbReference type="InterPro" id="IPR001021">
    <property type="entry name" value="Ribosomal_bL25_long"/>
</dbReference>
<dbReference type="InterPro" id="IPR020055">
    <property type="entry name" value="Ribosomal_bL25_short"/>
</dbReference>
<dbReference type="InterPro" id="IPR029751">
    <property type="entry name" value="Ribosomal_L25_dom"/>
</dbReference>
<dbReference type="InterPro" id="IPR020930">
    <property type="entry name" value="Ribosomal_uL5_bac-type"/>
</dbReference>
<dbReference type="NCBIfam" id="TIGR00731">
    <property type="entry name" value="bL25_bact_ctc"/>
    <property type="match status" value="1"/>
</dbReference>
<dbReference type="NCBIfam" id="NF004128">
    <property type="entry name" value="PRK05618.1-2"/>
    <property type="match status" value="1"/>
</dbReference>
<dbReference type="NCBIfam" id="NF004130">
    <property type="entry name" value="PRK05618.1-5"/>
    <property type="match status" value="1"/>
</dbReference>
<dbReference type="NCBIfam" id="NF004612">
    <property type="entry name" value="PRK05943.1"/>
    <property type="match status" value="1"/>
</dbReference>
<dbReference type="PANTHER" id="PTHR33284">
    <property type="entry name" value="RIBOSOMAL PROTEIN L25/GLN-TRNA SYNTHETASE, ANTI-CODON-BINDING DOMAIN-CONTAINING PROTEIN"/>
    <property type="match status" value="1"/>
</dbReference>
<dbReference type="PANTHER" id="PTHR33284:SF1">
    <property type="entry name" value="RIBOSOMAL PROTEIN L25_GLN-TRNA SYNTHETASE, ANTI-CODON-BINDING DOMAIN-CONTAINING PROTEIN"/>
    <property type="match status" value="1"/>
</dbReference>
<dbReference type="Pfam" id="PF01386">
    <property type="entry name" value="Ribosomal_L25p"/>
    <property type="match status" value="1"/>
</dbReference>
<dbReference type="Pfam" id="PF14693">
    <property type="entry name" value="Ribosomal_TL5_C"/>
    <property type="match status" value="1"/>
</dbReference>
<dbReference type="SUPFAM" id="SSF50715">
    <property type="entry name" value="Ribosomal protein L25-like"/>
    <property type="match status" value="1"/>
</dbReference>
<gene>
    <name evidence="1" type="primary">rplY</name>
    <name evidence="1" type="synonym">ctc</name>
    <name type="ordered locus">PFLU_0731</name>
</gene>
<comment type="function">
    <text evidence="1">This is one of the proteins that binds to the 5S RNA in the ribosome where it forms part of the central protuberance.</text>
</comment>
<comment type="subunit">
    <text evidence="1">Part of the 50S ribosomal subunit; part of the 5S rRNA/L5/L18/L25 subcomplex. Contacts the 5S rRNA. Binds to the 5S rRNA independently of L5 and L18.</text>
</comment>
<comment type="similarity">
    <text evidence="1">Belongs to the bacterial ribosomal protein bL25 family. CTC subfamily.</text>
</comment>
<feature type="chain" id="PRO_1000214655" description="Large ribosomal subunit protein bL25">
    <location>
        <begin position="1"/>
        <end position="200"/>
    </location>
</feature>
<proteinExistence type="inferred from homology"/>
<sequence>MNDFTLNAQARTDLGKGASRRLRHAANIPAVVYGGNKPAESVTILSKEIAKLFENEAAYSHVIELNVDGTKQNVIVKAMQRHPSKQFIMHADFVRVVAGQKLTAIVPVHFVGEDAPVKKGGVVSHTATELEVTCLPKDLPEFIEVDLSAAEIGTIIHLSDLKAPKGVEFVALAHNDDKAVANVHAPRVVAEDEEGETAAE</sequence>
<protein>
    <recommendedName>
        <fullName evidence="1">Large ribosomal subunit protein bL25</fullName>
    </recommendedName>
    <alternativeName>
        <fullName evidence="2">50S ribosomal protein L25</fullName>
    </alternativeName>
    <alternativeName>
        <fullName evidence="1">General stress protein CTC</fullName>
    </alternativeName>
</protein>
<reference key="1">
    <citation type="journal article" date="2009" name="Genome Biol.">
        <title>Genomic and genetic analyses of diversity and plant interactions of Pseudomonas fluorescens.</title>
        <authorList>
            <person name="Silby M.W."/>
            <person name="Cerdeno-Tarraga A.M."/>
            <person name="Vernikos G.S."/>
            <person name="Giddens S.R."/>
            <person name="Jackson R.W."/>
            <person name="Preston G.M."/>
            <person name="Zhang X.-X."/>
            <person name="Moon C.D."/>
            <person name="Gehrig S.M."/>
            <person name="Godfrey S.A.C."/>
            <person name="Knight C.G."/>
            <person name="Malone J.G."/>
            <person name="Robinson Z."/>
            <person name="Spiers A.J."/>
            <person name="Harris S."/>
            <person name="Challis G.L."/>
            <person name="Yaxley A.M."/>
            <person name="Harris D."/>
            <person name="Seeger K."/>
            <person name="Murphy L."/>
            <person name="Rutter S."/>
            <person name="Squares R."/>
            <person name="Quail M.A."/>
            <person name="Saunders E."/>
            <person name="Mavromatis K."/>
            <person name="Brettin T.S."/>
            <person name="Bentley S.D."/>
            <person name="Hothersall J."/>
            <person name="Stephens E."/>
            <person name="Thomas C.M."/>
            <person name="Parkhill J."/>
            <person name="Levy S.B."/>
            <person name="Rainey P.B."/>
            <person name="Thomson N.R."/>
        </authorList>
    </citation>
    <scope>NUCLEOTIDE SEQUENCE [LARGE SCALE GENOMIC DNA]</scope>
    <source>
        <strain>SBW25</strain>
    </source>
</reference>
<evidence type="ECO:0000255" key="1">
    <source>
        <dbReference type="HAMAP-Rule" id="MF_01334"/>
    </source>
</evidence>
<evidence type="ECO:0000305" key="2"/>